<accession>Q43870</accession>
<accession>Q8LDB2</accession>
<accession>Q8RWJ3</accession>
<protein>
    <recommendedName>
        <fullName>ATP sulfurylase 2</fullName>
        <ecNumber>2.7.7.4</ecNumber>
    </recommendedName>
</protein>
<dbReference type="EC" id="2.7.7.4"/>
<dbReference type="EMBL" id="U06276">
    <property type="protein sequence ID" value="AAA92351.1"/>
    <property type="molecule type" value="mRNA"/>
</dbReference>
<dbReference type="EMBL" id="X79210">
    <property type="protein sequence ID" value="CAA55799.1"/>
    <property type="molecule type" value="mRNA"/>
</dbReference>
<dbReference type="EMBL" id="U40715">
    <property type="protein sequence ID" value="AAC49324.1"/>
    <property type="molecule type" value="mRNA"/>
</dbReference>
<dbReference type="EMBL" id="U59737">
    <property type="protein sequence ID" value="AAB09471.1"/>
    <property type="molecule type" value="Genomic_DNA"/>
</dbReference>
<dbReference type="EMBL" id="AC007797">
    <property type="protein sequence ID" value="AAG12541.1"/>
    <property type="molecule type" value="Genomic_DNA"/>
</dbReference>
<dbReference type="EMBL" id="CP002684">
    <property type="protein sequence ID" value="AEE29913.1"/>
    <property type="molecule type" value="Genomic_DNA"/>
</dbReference>
<dbReference type="EMBL" id="AY093049">
    <property type="protein sequence ID" value="AAM13048.1"/>
    <property type="molecule type" value="mRNA"/>
</dbReference>
<dbReference type="EMBL" id="BT000417">
    <property type="protein sequence ID" value="AAN15736.1"/>
    <property type="molecule type" value="mRNA"/>
</dbReference>
<dbReference type="EMBL" id="AY086101">
    <property type="protein sequence ID" value="AAM63309.1"/>
    <property type="molecule type" value="mRNA"/>
</dbReference>
<dbReference type="PIR" id="S44943">
    <property type="entry name" value="S44943"/>
</dbReference>
<dbReference type="RefSeq" id="NP_564099.1">
    <molecule id="Q43870-1"/>
    <property type="nucleotide sequence ID" value="NM_101847.4"/>
</dbReference>
<dbReference type="SMR" id="Q43870"/>
<dbReference type="BioGRID" id="23819">
    <property type="interactions" value="1"/>
</dbReference>
<dbReference type="FunCoup" id="Q43870">
    <property type="interactions" value="2798"/>
</dbReference>
<dbReference type="IntAct" id="Q43870">
    <property type="interactions" value="1"/>
</dbReference>
<dbReference type="STRING" id="3702.Q43870"/>
<dbReference type="GlyGen" id="Q43870">
    <property type="glycosylation" value="1 site"/>
</dbReference>
<dbReference type="MetOSite" id="Q43870"/>
<dbReference type="PaxDb" id="3702-AT1G19920.1"/>
<dbReference type="ProteomicsDB" id="244454">
    <molecule id="Q43870-1"/>
</dbReference>
<dbReference type="EnsemblPlants" id="AT1G19920.1">
    <molecule id="Q43870-1"/>
    <property type="protein sequence ID" value="AT1G19920.1"/>
    <property type="gene ID" value="AT1G19920"/>
</dbReference>
<dbReference type="GeneID" id="838580"/>
<dbReference type="Gramene" id="AT1G19920.1">
    <molecule id="Q43870-1"/>
    <property type="protein sequence ID" value="AT1G19920.1"/>
    <property type="gene ID" value="AT1G19920"/>
</dbReference>
<dbReference type="KEGG" id="ath:AT1G19920"/>
<dbReference type="Araport" id="AT1G19920"/>
<dbReference type="TAIR" id="AT1G19920">
    <property type="gene designation" value="APS2"/>
</dbReference>
<dbReference type="eggNOG" id="KOG0636">
    <property type="taxonomic scope" value="Eukaryota"/>
</dbReference>
<dbReference type="HOGENOM" id="CLU_009463_2_0_1"/>
<dbReference type="InParanoid" id="Q43870"/>
<dbReference type="OMA" id="LPASQCK"/>
<dbReference type="PhylomeDB" id="Q43870"/>
<dbReference type="BioCyc" id="MetaCyc:AT1G19920-MONOMER"/>
<dbReference type="BRENDA" id="2.7.7.4">
    <property type="organism ID" value="399"/>
</dbReference>
<dbReference type="UniPathway" id="UPA00140">
    <property type="reaction ID" value="UER00204"/>
</dbReference>
<dbReference type="CD-CODE" id="4299E36E">
    <property type="entry name" value="Nucleolus"/>
</dbReference>
<dbReference type="PRO" id="PR:Q43870"/>
<dbReference type="Proteomes" id="UP000006548">
    <property type="component" value="Chromosome 1"/>
</dbReference>
<dbReference type="ExpressionAtlas" id="Q43870">
    <property type="expression patterns" value="baseline and differential"/>
</dbReference>
<dbReference type="GO" id="GO:0009507">
    <property type="term" value="C:chloroplast"/>
    <property type="evidence" value="ECO:0000314"/>
    <property type="project" value="TAIR"/>
</dbReference>
<dbReference type="GO" id="GO:0009570">
    <property type="term" value="C:chloroplast stroma"/>
    <property type="evidence" value="ECO:0007005"/>
    <property type="project" value="TAIR"/>
</dbReference>
<dbReference type="GO" id="GO:0005634">
    <property type="term" value="C:nucleus"/>
    <property type="evidence" value="ECO:0007005"/>
    <property type="project" value="TAIR"/>
</dbReference>
<dbReference type="GO" id="GO:0005524">
    <property type="term" value="F:ATP binding"/>
    <property type="evidence" value="ECO:0007669"/>
    <property type="project" value="UniProtKB-KW"/>
</dbReference>
<dbReference type="GO" id="GO:0004781">
    <property type="term" value="F:sulfate adenylyltransferase (ATP) activity"/>
    <property type="evidence" value="ECO:0000315"/>
    <property type="project" value="TAIR"/>
</dbReference>
<dbReference type="GO" id="GO:0009970">
    <property type="term" value="P:cellular response to sulfate starvation"/>
    <property type="evidence" value="ECO:0000270"/>
    <property type="project" value="UniProtKB"/>
</dbReference>
<dbReference type="GO" id="GO:0070814">
    <property type="term" value="P:hydrogen sulfide biosynthetic process"/>
    <property type="evidence" value="ECO:0007669"/>
    <property type="project" value="UniProtKB-UniPathway"/>
</dbReference>
<dbReference type="GO" id="GO:0000103">
    <property type="term" value="P:sulfate assimilation"/>
    <property type="evidence" value="ECO:0000304"/>
    <property type="project" value="TAIR"/>
</dbReference>
<dbReference type="CDD" id="cd00517">
    <property type="entry name" value="ATPS"/>
    <property type="match status" value="1"/>
</dbReference>
<dbReference type="FunFam" id="3.10.400.10:FF:000002">
    <property type="entry name" value="ATP sulfurylase 2"/>
    <property type="match status" value="1"/>
</dbReference>
<dbReference type="FunFam" id="3.40.50.620:FF:000006">
    <property type="entry name" value="bifunctional 3'-phosphoadenosine 5'-phosphosulfate synthase 1"/>
    <property type="match status" value="1"/>
</dbReference>
<dbReference type="Gene3D" id="3.40.50.620">
    <property type="entry name" value="HUPs"/>
    <property type="match status" value="1"/>
</dbReference>
<dbReference type="Gene3D" id="3.10.400.10">
    <property type="entry name" value="Sulfate adenylyltransferase"/>
    <property type="match status" value="1"/>
</dbReference>
<dbReference type="InterPro" id="IPR025980">
    <property type="entry name" value="ATP-Sase_PUA-like_dom"/>
</dbReference>
<dbReference type="InterPro" id="IPR015947">
    <property type="entry name" value="PUA-like_sf"/>
</dbReference>
<dbReference type="InterPro" id="IPR014729">
    <property type="entry name" value="Rossmann-like_a/b/a_fold"/>
</dbReference>
<dbReference type="InterPro" id="IPR024951">
    <property type="entry name" value="Sulfurylase_cat_dom"/>
</dbReference>
<dbReference type="InterPro" id="IPR002650">
    <property type="entry name" value="Sulphate_adenylyltransferase"/>
</dbReference>
<dbReference type="NCBIfam" id="TIGR00339">
    <property type="entry name" value="sopT"/>
    <property type="match status" value="1"/>
</dbReference>
<dbReference type="PANTHER" id="PTHR11055:SF37">
    <property type="entry name" value="ATP SULFURYLASE 2"/>
    <property type="match status" value="1"/>
</dbReference>
<dbReference type="PANTHER" id="PTHR11055">
    <property type="entry name" value="BIFUNCTIONAL 3'-PHOSPHOADENOSINE 5'-PHOSPHOSULFATE SYNTHASE"/>
    <property type="match status" value="1"/>
</dbReference>
<dbReference type="Pfam" id="PF01747">
    <property type="entry name" value="ATP-sulfurylase"/>
    <property type="match status" value="1"/>
</dbReference>
<dbReference type="Pfam" id="PF14306">
    <property type="entry name" value="PUA_2"/>
    <property type="match status" value="1"/>
</dbReference>
<dbReference type="SUPFAM" id="SSF52374">
    <property type="entry name" value="Nucleotidylyl transferase"/>
    <property type="match status" value="1"/>
</dbReference>
<dbReference type="SUPFAM" id="SSF88697">
    <property type="entry name" value="PUA domain-like"/>
    <property type="match status" value="1"/>
</dbReference>
<organism>
    <name type="scientific">Arabidopsis thaliana</name>
    <name type="common">Mouse-ear cress</name>
    <dbReference type="NCBI Taxonomy" id="3702"/>
    <lineage>
        <taxon>Eukaryota</taxon>
        <taxon>Viridiplantae</taxon>
        <taxon>Streptophyta</taxon>
        <taxon>Embryophyta</taxon>
        <taxon>Tracheophyta</taxon>
        <taxon>Spermatophyta</taxon>
        <taxon>Magnoliopsida</taxon>
        <taxon>eudicotyledons</taxon>
        <taxon>Gunneridae</taxon>
        <taxon>Pentapetalae</taxon>
        <taxon>rosids</taxon>
        <taxon>malvids</taxon>
        <taxon>Brassicales</taxon>
        <taxon>Brassicaceae</taxon>
        <taxon>Camelineae</taxon>
        <taxon>Arabidopsis</taxon>
    </lineage>
</organism>
<keyword id="KW-0024">Alternative initiation</keyword>
<keyword id="KW-0067">ATP-binding</keyword>
<keyword id="KW-0150">Chloroplast</keyword>
<keyword id="KW-0963">Cytoplasm</keyword>
<keyword id="KW-0547">Nucleotide-binding</keyword>
<keyword id="KW-0548">Nucleotidyltransferase</keyword>
<keyword id="KW-0934">Plastid</keyword>
<keyword id="KW-1185">Reference proteome</keyword>
<keyword id="KW-0808">Transferase</keyword>
<keyword id="KW-0809">Transit peptide</keyword>
<gene>
    <name type="primary">APS2</name>
    <name type="synonym">ASA1</name>
    <name type="synonym">MET3-1</name>
    <name type="ordered locus">At1g19920</name>
    <name type="ORF">F6F9.2</name>
</gene>
<reference key="1">
    <citation type="journal article" date="1995" name="Arch. Biochem. Biophys.">
        <title>Adenosine-5'-triphosphate-sulfurylase from Arabidopsis thaliana and Escherichia coli are functionally equivalent but structurally and kinetically divergent: nucleotide sequence of two adenosine-5'-triphosphate-sulfurylase cDNAs from Arabidopsis thaliana and analysis of a recombinant enzyme.</title>
        <authorList>
            <person name="Murillo M."/>
            <person name="Leustek T."/>
        </authorList>
    </citation>
    <scope>NUCLEOTIDE SEQUENCE [MRNA]</scope>
    <scope>CATALYTIC ACTIVITY</scope>
    <scope>PROBABLE ALTERNATIVE INITIATION</scope>
    <source>
        <strain>cv. Landsberg erecta</strain>
    </source>
</reference>
<reference key="2">
    <citation type="journal article" date="1995" name="Plant Physiol.">
        <title>A cDNA clone for an ATP-sulfurylase from Arabidopsis thaliana.</title>
        <authorList>
            <person name="Klonus D."/>
            <person name="Riesmeier J.W."/>
            <person name="Willmitzer L."/>
        </authorList>
    </citation>
    <scope>NUCLEOTIDE SEQUENCE [MRNA]</scope>
    <source>
        <strain>cv. Landsberg erecta</strain>
        <tissue>Seedling</tissue>
    </source>
</reference>
<reference key="3">
    <citation type="journal article" date="1996" name="J. Biol. Chem.">
        <title>Cloning of a cDNA encoded by a member of the Arabidopsis thaliana ATP sulfurylase multigene family. Expression studies in yeast and in relation to plant sulfur nutrition.</title>
        <authorList>
            <person name="Logan H.M."/>
            <person name="Cathala N."/>
            <person name="Grignon C."/>
            <person name="Davidian J.-C."/>
        </authorList>
    </citation>
    <scope>NUCLEOTIDE SEQUENCE [MRNA]</scope>
    <scope>CATALYTIC ACTIVITY</scope>
    <scope>TISSUE SPECIFICITY</scope>
    <scope>INDUCTION BY SULFUR STARVATION</scope>
    <source>
        <strain>cv. Landsberg erecta</strain>
    </source>
</reference>
<reference key="4">
    <citation type="journal article" date="2000" name="Gene">
        <title>Functional characterization of a gene encoding a fourth ATP sulfurylase isoform from Arabidopsis thaliana.</title>
        <authorList>
            <person name="Hatzfeld Y."/>
            <person name="Lee S."/>
            <person name="Lee M."/>
            <person name="Leustek T."/>
            <person name="Saito K."/>
        </authorList>
    </citation>
    <scope>NUCLEOTIDE SEQUENCE [GENOMIC DNA]</scope>
    <source>
        <strain>cv. Landsberg erecta</strain>
    </source>
</reference>
<reference key="5">
    <citation type="journal article" date="2000" name="Nature">
        <title>Sequence and analysis of chromosome 1 of the plant Arabidopsis thaliana.</title>
        <authorList>
            <person name="Theologis A."/>
            <person name="Ecker J.R."/>
            <person name="Palm C.J."/>
            <person name="Federspiel N.A."/>
            <person name="Kaul S."/>
            <person name="White O."/>
            <person name="Alonso J."/>
            <person name="Altafi H."/>
            <person name="Araujo R."/>
            <person name="Bowman C.L."/>
            <person name="Brooks S.Y."/>
            <person name="Buehler E."/>
            <person name="Chan A."/>
            <person name="Chao Q."/>
            <person name="Chen H."/>
            <person name="Cheuk R.F."/>
            <person name="Chin C.W."/>
            <person name="Chung M.K."/>
            <person name="Conn L."/>
            <person name="Conway A.B."/>
            <person name="Conway A.R."/>
            <person name="Creasy T.H."/>
            <person name="Dewar K."/>
            <person name="Dunn P."/>
            <person name="Etgu P."/>
            <person name="Feldblyum T.V."/>
            <person name="Feng J.-D."/>
            <person name="Fong B."/>
            <person name="Fujii C.Y."/>
            <person name="Gill J.E."/>
            <person name="Goldsmith A.D."/>
            <person name="Haas B."/>
            <person name="Hansen N.F."/>
            <person name="Hughes B."/>
            <person name="Huizar L."/>
            <person name="Hunter J.L."/>
            <person name="Jenkins J."/>
            <person name="Johnson-Hopson C."/>
            <person name="Khan S."/>
            <person name="Khaykin E."/>
            <person name="Kim C.J."/>
            <person name="Koo H.L."/>
            <person name="Kremenetskaia I."/>
            <person name="Kurtz D.B."/>
            <person name="Kwan A."/>
            <person name="Lam B."/>
            <person name="Langin-Hooper S."/>
            <person name="Lee A."/>
            <person name="Lee J.M."/>
            <person name="Lenz C.A."/>
            <person name="Li J.H."/>
            <person name="Li Y.-P."/>
            <person name="Lin X."/>
            <person name="Liu S.X."/>
            <person name="Liu Z.A."/>
            <person name="Luros J.S."/>
            <person name="Maiti R."/>
            <person name="Marziali A."/>
            <person name="Militscher J."/>
            <person name="Miranda M."/>
            <person name="Nguyen M."/>
            <person name="Nierman W.C."/>
            <person name="Osborne B.I."/>
            <person name="Pai G."/>
            <person name="Peterson J."/>
            <person name="Pham P.K."/>
            <person name="Rizzo M."/>
            <person name="Rooney T."/>
            <person name="Rowley D."/>
            <person name="Sakano H."/>
            <person name="Salzberg S.L."/>
            <person name="Schwartz J.R."/>
            <person name="Shinn P."/>
            <person name="Southwick A.M."/>
            <person name="Sun H."/>
            <person name="Tallon L.J."/>
            <person name="Tambunga G."/>
            <person name="Toriumi M.J."/>
            <person name="Town C.D."/>
            <person name="Utterback T."/>
            <person name="Van Aken S."/>
            <person name="Vaysberg M."/>
            <person name="Vysotskaia V.S."/>
            <person name="Walker M."/>
            <person name="Wu D."/>
            <person name="Yu G."/>
            <person name="Fraser C.M."/>
            <person name="Venter J.C."/>
            <person name="Davis R.W."/>
        </authorList>
    </citation>
    <scope>NUCLEOTIDE SEQUENCE [LARGE SCALE GENOMIC DNA]</scope>
    <source>
        <strain>cv. Columbia</strain>
    </source>
</reference>
<reference key="6">
    <citation type="journal article" date="2017" name="Plant J.">
        <title>Araport11: a complete reannotation of the Arabidopsis thaliana reference genome.</title>
        <authorList>
            <person name="Cheng C.Y."/>
            <person name="Krishnakumar V."/>
            <person name="Chan A.P."/>
            <person name="Thibaud-Nissen F."/>
            <person name="Schobel S."/>
            <person name="Town C.D."/>
        </authorList>
    </citation>
    <scope>GENOME REANNOTATION</scope>
    <source>
        <strain>cv. Columbia</strain>
    </source>
</reference>
<reference key="7">
    <citation type="journal article" date="2003" name="Science">
        <title>Empirical analysis of transcriptional activity in the Arabidopsis genome.</title>
        <authorList>
            <person name="Yamada K."/>
            <person name="Lim J."/>
            <person name="Dale J.M."/>
            <person name="Chen H."/>
            <person name="Shinn P."/>
            <person name="Palm C.J."/>
            <person name="Southwick A.M."/>
            <person name="Wu H.C."/>
            <person name="Kim C.J."/>
            <person name="Nguyen M."/>
            <person name="Pham P.K."/>
            <person name="Cheuk R.F."/>
            <person name="Karlin-Newmann G."/>
            <person name="Liu S.X."/>
            <person name="Lam B."/>
            <person name="Sakano H."/>
            <person name="Wu T."/>
            <person name="Yu G."/>
            <person name="Miranda M."/>
            <person name="Quach H.L."/>
            <person name="Tripp M."/>
            <person name="Chang C.H."/>
            <person name="Lee J.M."/>
            <person name="Toriumi M.J."/>
            <person name="Chan M.M."/>
            <person name="Tang C.C."/>
            <person name="Onodera C.S."/>
            <person name="Deng J.M."/>
            <person name="Akiyama K."/>
            <person name="Ansari Y."/>
            <person name="Arakawa T."/>
            <person name="Banh J."/>
            <person name="Banno F."/>
            <person name="Bowser L."/>
            <person name="Brooks S.Y."/>
            <person name="Carninci P."/>
            <person name="Chao Q."/>
            <person name="Choy N."/>
            <person name="Enju A."/>
            <person name="Goldsmith A.D."/>
            <person name="Gurjal M."/>
            <person name="Hansen N.F."/>
            <person name="Hayashizaki Y."/>
            <person name="Johnson-Hopson C."/>
            <person name="Hsuan V.W."/>
            <person name="Iida K."/>
            <person name="Karnes M."/>
            <person name="Khan S."/>
            <person name="Koesema E."/>
            <person name="Ishida J."/>
            <person name="Jiang P.X."/>
            <person name="Jones T."/>
            <person name="Kawai J."/>
            <person name="Kamiya A."/>
            <person name="Meyers C."/>
            <person name="Nakajima M."/>
            <person name="Narusaka M."/>
            <person name="Seki M."/>
            <person name="Sakurai T."/>
            <person name="Satou M."/>
            <person name="Tamse R."/>
            <person name="Vaysberg M."/>
            <person name="Wallender E.K."/>
            <person name="Wong C."/>
            <person name="Yamamura Y."/>
            <person name="Yuan S."/>
            <person name="Shinozaki K."/>
            <person name="Davis R.W."/>
            <person name="Theologis A."/>
            <person name="Ecker J.R."/>
        </authorList>
    </citation>
    <scope>NUCLEOTIDE SEQUENCE [LARGE SCALE MRNA]</scope>
    <source>
        <strain>cv. Columbia</strain>
    </source>
</reference>
<reference key="8">
    <citation type="submission" date="2002-03" db="EMBL/GenBank/DDBJ databases">
        <title>Full-length cDNA from Arabidopsis thaliana.</title>
        <authorList>
            <person name="Brover V.V."/>
            <person name="Troukhan M.E."/>
            <person name="Alexandrov N.A."/>
            <person name="Lu Y.-P."/>
            <person name="Flavell R.B."/>
            <person name="Feldmann K.A."/>
        </authorList>
    </citation>
    <scope>NUCLEOTIDE SEQUENCE [LARGE SCALE MRNA]</scope>
</reference>
<reference key="9">
    <citation type="journal article" date="1998" name="Plant Physiol.">
        <title>Effect of ATP sulfurylase overexpression in bright yellow 2 tobacco cells. Regulation Of atp sulfurylase and SO4(2-) transport activities.</title>
        <authorList>
            <person name="Hatzfeld Y."/>
            <person name="Cathala N."/>
            <person name="Grignon C."/>
            <person name="Davidian J.-C."/>
        </authorList>
    </citation>
    <scope>CATALYTIC ACTIVITY</scope>
    <source>
        <strain>cv. Landsberg erecta</strain>
    </source>
</reference>
<evidence type="ECO:0000250" key="1"/>
<evidence type="ECO:0000255" key="2"/>
<evidence type="ECO:0000269" key="3">
    <source>
    </source>
</evidence>
<evidence type="ECO:0000269" key="4">
    <source>
    </source>
</evidence>
<evidence type="ECO:0000269" key="5">
    <source>
    </source>
</evidence>
<evidence type="ECO:0000305" key="6"/>
<name>APS2_ARATH</name>
<sequence>MSLMIRSSYVSHITLFQPRNSKPSSFTNQISFLSSSNNNPFLNLVYKRNLTMQSVSKMTVKSSLIDPDGGELVELIVPETEIGVKKAESETMPKVKLNQIDLEWVHVISEGWASPLKGFMREDEYLQSLHFNSLRLKNGTFVNMSLPIVLAIDDDTKEQIGSSENVALVCPQGDIIGSLRSVEIYKHNKEERIARTWGTTSPGLPYVEEYITPSGNWLIGGDLEVFEPIKYNDGLDHYRLSPKQLREEFDNRQADAVFAFQLRNPVHNGHALLMNDTRKRLLEMGYKNPVLLLHPLGGFTKADDVPLDVRMEQHSKVLEDGVLDPKTTIVSIFPSPMHYAGPTEVQWHAKARINAGANFYIVGRDPAGMGHPTEKRDLYDPDHGKRVLSMAPGLEKLNILPFRVAAYDTIEKKMAFFDPSRAKEFLFISGTKMRTYARTGENPPDGFMCPSGWNVLVKYYESLQESEAKQQAVVSA</sequence>
<feature type="transit peptide" description="Chloroplast" evidence="2">
    <location>
        <begin position="1"/>
        <end position="56"/>
    </location>
</feature>
<feature type="chain" id="PRO_5000144796" description="ATP sulfurylase 2">
    <location>
        <begin position="57"/>
        <end position="476"/>
    </location>
</feature>
<feature type="splice variant" id="VSP_041553" description="In isoform 2." evidence="6">
    <location>
        <begin position="1"/>
        <end position="51"/>
    </location>
</feature>
<feature type="sequence conflict" description="In Ref. 7; AAM13048/AAN15736." evidence="6" ref="7">
    <original>W</original>
    <variation>R</variation>
    <location>
        <position position="453"/>
    </location>
</feature>
<feature type="sequence conflict" description="In Ref. 8; AAM63309." evidence="6" ref="8">
    <original>S</original>
    <variation>K</variation>
    <location>
        <position position="466"/>
    </location>
</feature>
<proteinExistence type="evidence at protein level"/>
<comment type="catalytic activity">
    <reaction evidence="3 4 5">
        <text>sulfate + ATP + H(+) = adenosine 5'-phosphosulfate + diphosphate</text>
        <dbReference type="Rhea" id="RHEA:18133"/>
        <dbReference type="ChEBI" id="CHEBI:15378"/>
        <dbReference type="ChEBI" id="CHEBI:16189"/>
        <dbReference type="ChEBI" id="CHEBI:30616"/>
        <dbReference type="ChEBI" id="CHEBI:33019"/>
        <dbReference type="ChEBI" id="CHEBI:58243"/>
        <dbReference type="EC" id="2.7.7.4"/>
    </reaction>
</comment>
<comment type="pathway">
    <text>Sulfur metabolism; hydrogen sulfide biosynthesis; sulfite from sulfate: step 1/3.</text>
</comment>
<comment type="subunit">
    <text evidence="1">Homotetramer.</text>
</comment>
<comment type="subcellular location">
    <molecule>Isoform 1</molecule>
    <subcellularLocation>
        <location evidence="2">Plastid</location>
        <location evidence="2">Chloroplast</location>
    </subcellularLocation>
</comment>
<comment type="subcellular location">
    <molecule>Isoform 2</molecule>
    <subcellularLocation>
        <location evidence="6">Cytoplasm</location>
    </subcellularLocation>
</comment>
<comment type="alternative products">
    <event type="alternative initiation"/>
    <isoform>
        <id>Q43870-1</id>
        <name>1</name>
        <sequence type="displayed"/>
    </isoform>
    <isoform>
        <id>Q43870-2</id>
        <name>2</name>
        <sequence type="described" ref="VSP_041553"/>
    </isoform>
</comment>
<comment type="tissue specificity">
    <text evidence="4">Mostly expressed in leaves or cotyledons.</text>
</comment>
<comment type="induction">
    <text evidence="4">In roots, upon sulfur starvation.</text>
</comment>
<comment type="similarity">
    <text evidence="6">Belongs to the sulfate adenylyltransferase family.</text>
</comment>